<protein>
    <recommendedName>
        <fullName evidence="1">Undecaprenyl-diphosphatase 2</fullName>
        <ecNumber evidence="1">3.6.1.27</ecNumber>
    </recommendedName>
    <alternativeName>
        <fullName evidence="1">Bacitracin resistance protein 2</fullName>
    </alternativeName>
    <alternativeName>
        <fullName evidence="1">Undecaprenyl pyrophosphate phosphatase 2</fullName>
    </alternativeName>
</protein>
<reference key="1">
    <citation type="journal article" date="2011" name="Stand. Genomic Sci.">
        <title>Complete genome sequence of Rhodospirillum rubrum type strain (S1).</title>
        <authorList>
            <person name="Munk A.C."/>
            <person name="Copeland A."/>
            <person name="Lucas S."/>
            <person name="Lapidus A."/>
            <person name="Del Rio T.G."/>
            <person name="Barry K."/>
            <person name="Detter J.C."/>
            <person name="Hammon N."/>
            <person name="Israni S."/>
            <person name="Pitluck S."/>
            <person name="Brettin T."/>
            <person name="Bruce D."/>
            <person name="Han C."/>
            <person name="Tapia R."/>
            <person name="Gilna P."/>
            <person name="Schmutz J."/>
            <person name="Larimer F."/>
            <person name="Land M."/>
            <person name="Kyrpides N.C."/>
            <person name="Mavromatis K."/>
            <person name="Richardson P."/>
            <person name="Rohde M."/>
            <person name="Goeker M."/>
            <person name="Klenk H.P."/>
            <person name="Zhang Y."/>
            <person name="Roberts G.P."/>
            <person name="Reslewic S."/>
            <person name="Schwartz D.C."/>
        </authorList>
    </citation>
    <scope>NUCLEOTIDE SEQUENCE [LARGE SCALE GENOMIC DNA]</scope>
    <source>
        <strain>ATCC 11170 / ATH 1.1.1 / DSM 467 / LMG 4362 / NCIMB 8255 / S1</strain>
    </source>
</reference>
<sequence>MDLVMLIKAAILGLVEGITEFLPISSTGHLIIAGSLLDFLDEQKRDVFVIVIQLGAILAVCWEYRRRLTDVVAGLGSDPQSWKFVTNLLIAFLPAVVLGLTFGKAIKAHLFSPVPVATAFIVGGLVILWAERRRHPIRVREVDEMTWVDALKIGLAQCFALIPGTSRSGATIIGGLFFGLSRKAATEFSFFLAIPTLTAASLYDLYKNRALLDGDMSGLMAVGFVVSFLSALVAVRGLIRYISRHDFTVFAWYRIAFGLVVLATAWSGLVSWSA</sequence>
<keyword id="KW-0046">Antibiotic resistance</keyword>
<keyword id="KW-0997">Cell inner membrane</keyword>
<keyword id="KW-1003">Cell membrane</keyword>
<keyword id="KW-0133">Cell shape</keyword>
<keyword id="KW-0961">Cell wall biogenesis/degradation</keyword>
<keyword id="KW-0378">Hydrolase</keyword>
<keyword id="KW-0472">Membrane</keyword>
<keyword id="KW-0573">Peptidoglycan synthesis</keyword>
<keyword id="KW-1185">Reference proteome</keyword>
<keyword id="KW-0812">Transmembrane</keyword>
<keyword id="KW-1133">Transmembrane helix</keyword>
<feature type="chain" id="PRO_0000250259" description="Undecaprenyl-diphosphatase 2">
    <location>
        <begin position="1"/>
        <end position="274"/>
    </location>
</feature>
<feature type="transmembrane region" description="Helical" evidence="1">
    <location>
        <begin position="47"/>
        <end position="64"/>
    </location>
</feature>
<feature type="transmembrane region" description="Helical" evidence="1">
    <location>
        <begin position="82"/>
        <end position="102"/>
    </location>
</feature>
<feature type="transmembrane region" description="Helical" evidence="1">
    <location>
        <begin position="110"/>
        <end position="130"/>
    </location>
</feature>
<feature type="transmembrane region" description="Helical" evidence="1">
    <location>
        <begin position="185"/>
        <end position="205"/>
    </location>
</feature>
<feature type="transmembrane region" description="Helical" evidence="1">
    <location>
        <begin position="219"/>
        <end position="239"/>
    </location>
</feature>
<feature type="transmembrane region" description="Helical" evidence="1">
    <location>
        <begin position="249"/>
        <end position="269"/>
    </location>
</feature>
<proteinExistence type="inferred from homology"/>
<organism>
    <name type="scientific">Rhodospirillum rubrum (strain ATCC 11170 / ATH 1.1.1 / DSM 467 / LMG 4362 / NCIMB 8255 / S1)</name>
    <dbReference type="NCBI Taxonomy" id="269796"/>
    <lineage>
        <taxon>Bacteria</taxon>
        <taxon>Pseudomonadati</taxon>
        <taxon>Pseudomonadota</taxon>
        <taxon>Alphaproteobacteria</taxon>
        <taxon>Rhodospirillales</taxon>
        <taxon>Rhodospirillaceae</taxon>
        <taxon>Rhodospirillum</taxon>
    </lineage>
</organism>
<dbReference type="EC" id="3.6.1.27" evidence="1"/>
<dbReference type="EMBL" id="CP000230">
    <property type="protein sequence ID" value="ABC22603.1"/>
    <property type="molecule type" value="Genomic_DNA"/>
</dbReference>
<dbReference type="RefSeq" id="WP_011389556.1">
    <property type="nucleotide sequence ID" value="NC_007643.1"/>
</dbReference>
<dbReference type="RefSeq" id="YP_426890.1">
    <property type="nucleotide sequence ID" value="NC_007643.1"/>
</dbReference>
<dbReference type="SMR" id="Q2RTE2"/>
<dbReference type="STRING" id="269796.Rru_A1803"/>
<dbReference type="EnsemblBacteria" id="ABC22603">
    <property type="protein sequence ID" value="ABC22603"/>
    <property type="gene ID" value="Rru_A1803"/>
</dbReference>
<dbReference type="KEGG" id="rru:Rru_A1803"/>
<dbReference type="PATRIC" id="fig|269796.9.peg.1880"/>
<dbReference type="eggNOG" id="COG1968">
    <property type="taxonomic scope" value="Bacteria"/>
</dbReference>
<dbReference type="HOGENOM" id="CLU_060296_2_0_5"/>
<dbReference type="PhylomeDB" id="Q2RTE2"/>
<dbReference type="Proteomes" id="UP000001929">
    <property type="component" value="Chromosome"/>
</dbReference>
<dbReference type="GO" id="GO:0005886">
    <property type="term" value="C:plasma membrane"/>
    <property type="evidence" value="ECO:0007669"/>
    <property type="project" value="UniProtKB-SubCell"/>
</dbReference>
<dbReference type="GO" id="GO:0050380">
    <property type="term" value="F:undecaprenyl-diphosphatase activity"/>
    <property type="evidence" value="ECO:0007669"/>
    <property type="project" value="UniProtKB-UniRule"/>
</dbReference>
<dbReference type="GO" id="GO:0071555">
    <property type="term" value="P:cell wall organization"/>
    <property type="evidence" value="ECO:0007669"/>
    <property type="project" value="UniProtKB-KW"/>
</dbReference>
<dbReference type="GO" id="GO:0009252">
    <property type="term" value="P:peptidoglycan biosynthetic process"/>
    <property type="evidence" value="ECO:0007669"/>
    <property type="project" value="UniProtKB-KW"/>
</dbReference>
<dbReference type="GO" id="GO:0008360">
    <property type="term" value="P:regulation of cell shape"/>
    <property type="evidence" value="ECO:0007669"/>
    <property type="project" value="UniProtKB-KW"/>
</dbReference>
<dbReference type="GO" id="GO:0046677">
    <property type="term" value="P:response to antibiotic"/>
    <property type="evidence" value="ECO:0007669"/>
    <property type="project" value="UniProtKB-UniRule"/>
</dbReference>
<dbReference type="HAMAP" id="MF_01006">
    <property type="entry name" value="Undec_diphosphatase"/>
    <property type="match status" value="1"/>
</dbReference>
<dbReference type="InterPro" id="IPR003824">
    <property type="entry name" value="UppP"/>
</dbReference>
<dbReference type="NCBIfam" id="NF001389">
    <property type="entry name" value="PRK00281.1-2"/>
    <property type="match status" value="1"/>
</dbReference>
<dbReference type="NCBIfam" id="NF001390">
    <property type="entry name" value="PRK00281.1-4"/>
    <property type="match status" value="1"/>
</dbReference>
<dbReference type="NCBIfam" id="TIGR00753">
    <property type="entry name" value="undec_PP_bacA"/>
    <property type="match status" value="1"/>
</dbReference>
<dbReference type="PANTHER" id="PTHR30622">
    <property type="entry name" value="UNDECAPRENYL-DIPHOSPHATASE"/>
    <property type="match status" value="1"/>
</dbReference>
<dbReference type="PANTHER" id="PTHR30622:SF3">
    <property type="entry name" value="UNDECAPRENYL-DIPHOSPHATASE"/>
    <property type="match status" value="1"/>
</dbReference>
<dbReference type="Pfam" id="PF02673">
    <property type="entry name" value="BacA"/>
    <property type="match status" value="1"/>
</dbReference>
<gene>
    <name evidence="1" type="primary">uppP2</name>
    <name type="ordered locus">Rru_A1803</name>
</gene>
<comment type="function">
    <text evidence="1">Catalyzes the dephosphorylation of undecaprenyl diphosphate (UPP). Confers resistance to bacitracin.</text>
</comment>
<comment type="catalytic activity">
    <reaction evidence="1">
        <text>di-trans,octa-cis-undecaprenyl diphosphate + H2O = di-trans,octa-cis-undecaprenyl phosphate + phosphate + H(+)</text>
        <dbReference type="Rhea" id="RHEA:28094"/>
        <dbReference type="ChEBI" id="CHEBI:15377"/>
        <dbReference type="ChEBI" id="CHEBI:15378"/>
        <dbReference type="ChEBI" id="CHEBI:43474"/>
        <dbReference type="ChEBI" id="CHEBI:58405"/>
        <dbReference type="ChEBI" id="CHEBI:60392"/>
        <dbReference type="EC" id="3.6.1.27"/>
    </reaction>
</comment>
<comment type="subcellular location">
    <subcellularLocation>
        <location evidence="1">Cell inner membrane</location>
        <topology evidence="1">Multi-pass membrane protein</topology>
    </subcellularLocation>
</comment>
<comment type="miscellaneous">
    <text>Bacitracin is thought to be involved in the inhibition of peptidoglycan synthesis by sequestering undecaprenyl diphosphate, thereby reducing the pool of lipid carrier available.</text>
</comment>
<comment type="similarity">
    <text evidence="1">Belongs to the UppP family.</text>
</comment>
<accession>Q2RTE2</accession>
<evidence type="ECO:0000255" key="1">
    <source>
        <dbReference type="HAMAP-Rule" id="MF_01006"/>
    </source>
</evidence>
<name>UPPP2_RHORT</name>